<name>CELB_EMENI</name>
<comment type="function">
    <text evidence="3">Has endoglucanase activity on substrates containing beta-1,4 glycosidic bonds, like in carboxymethylcellulose (CMC), hydroxyethylcellulose (HEC) and beta-glucan. Involved in the degradation of complex natural cellulosic substrates.</text>
</comment>
<comment type="catalytic activity">
    <reaction>
        <text>Endohydrolysis of (1-&gt;4)-beta-D-glucosidic linkages in cellulose, lichenin and cereal beta-D-glucans.</text>
        <dbReference type="EC" id="3.2.1.4"/>
    </reaction>
</comment>
<comment type="biophysicochemical properties">
    <phDependence>
        <text evidence="3">Optimum pH is 5.5.</text>
    </phDependence>
    <temperatureDependence>
        <text evidence="3">Optimum temperature is 42 degrees Celsius.</text>
    </temperatureDependence>
</comment>
<comment type="subcellular location">
    <subcellularLocation>
        <location evidence="1">Secreted</location>
    </subcellularLocation>
</comment>
<comment type="similarity">
    <text evidence="4">Belongs to the glycosyl hydrolase 7 (cellulase C) family.</text>
</comment>
<evidence type="ECO:0000250" key="1"/>
<evidence type="ECO:0000255" key="2"/>
<evidence type="ECO:0000269" key="3">
    <source>
    </source>
</evidence>
<evidence type="ECO:0000305" key="4"/>
<reference key="1">
    <citation type="journal article" date="2002" name="Fungal Genet. Biol.">
        <title>Regulation by carbon and nitrogen sources of a family of cellulases in Aspergillus nidulans.</title>
        <authorList>
            <person name="Lockington R.A."/>
            <person name="Rodbourn L."/>
            <person name="Barnett S."/>
            <person name="Carter C.J."/>
            <person name="Kelly J.M."/>
        </authorList>
    </citation>
    <scope>NUCLEOTIDE SEQUENCE [GENOMIC DNA]</scope>
</reference>
<reference key="2">
    <citation type="journal article" date="2005" name="Nature">
        <title>Sequencing of Aspergillus nidulans and comparative analysis with A. fumigatus and A. oryzae.</title>
        <authorList>
            <person name="Galagan J.E."/>
            <person name="Calvo S.E."/>
            <person name="Cuomo C."/>
            <person name="Ma L.-J."/>
            <person name="Wortman J.R."/>
            <person name="Batzoglou S."/>
            <person name="Lee S.-I."/>
            <person name="Bastuerkmen M."/>
            <person name="Spevak C.C."/>
            <person name="Clutterbuck J."/>
            <person name="Kapitonov V."/>
            <person name="Jurka J."/>
            <person name="Scazzocchio C."/>
            <person name="Farman M.L."/>
            <person name="Butler J."/>
            <person name="Purcell S."/>
            <person name="Harris S."/>
            <person name="Braus G.H."/>
            <person name="Draht O."/>
            <person name="Busch S."/>
            <person name="D'Enfert C."/>
            <person name="Bouchier C."/>
            <person name="Goldman G.H."/>
            <person name="Bell-Pedersen D."/>
            <person name="Griffiths-Jones S."/>
            <person name="Doonan J.H."/>
            <person name="Yu J."/>
            <person name="Vienken K."/>
            <person name="Pain A."/>
            <person name="Freitag M."/>
            <person name="Selker E.U."/>
            <person name="Archer D.B."/>
            <person name="Penalva M.A."/>
            <person name="Oakley B.R."/>
            <person name="Momany M."/>
            <person name="Tanaka T."/>
            <person name="Kumagai T."/>
            <person name="Asai K."/>
            <person name="Machida M."/>
            <person name="Nierman W.C."/>
            <person name="Denning D.W."/>
            <person name="Caddick M.X."/>
            <person name="Hynes M."/>
            <person name="Paoletti M."/>
            <person name="Fischer R."/>
            <person name="Miller B.L."/>
            <person name="Dyer P.S."/>
            <person name="Sachs M.S."/>
            <person name="Osmani S.A."/>
            <person name="Birren B.W."/>
        </authorList>
    </citation>
    <scope>NUCLEOTIDE SEQUENCE [LARGE SCALE GENOMIC DNA]</scope>
    <source>
        <strain>FGSC A4 / ATCC 38163 / CBS 112.46 / NRRL 194 / M139</strain>
    </source>
</reference>
<reference key="3">
    <citation type="journal article" date="2009" name="Fungal Genet. Biol.">
        <title>The 2008 update of the Aspergillus nidulans genome annotation: a community effort.</title>
        <authorList>
            <person name="Wortman J.R."/>
            <person name="Gilsenan J.M."/>
            <person name="Joardar V."/>
            <person name="Deegan J."/>
            <person name="Clutterbuck J."/>
            <person name="Andersen M.R."/>
            <person name="Archer D."/>
            <person name="Bencina M."/>
            <person name="Braus G."/>
            <person name="Coutinho P."/>
            <person name="von Dohren H."/>
            <person name="Doonan J."/>
            <person name="Driessen A.J."/>
            <person name="Durek P."/>
            <person name="Espeso E."/>
            <person name="Fekete E."/>
            <person name="Flipphi M."/>
            <person name="Estrada C.G."/>
            <person name="Geysens S."/>
            <person name="Goldman G."/>
            <person name="de Groot P.W."/>
            <person name="Hansen K."/>
            <person name="Harris S.D."/>
            <person name="Heinekamp T."/>
            <person name="Helmstaedt K."/>
            <person name="Henrissat B."/>
            <person name="Hofmann G."/>
            <person name="Homan T."/>
            <person name="Horio T."/>
            <person name="Horiuchi H."/>
            <person name="James S."/>
            <person name="Jones M."/>
            <person name="Karaffa L."/>
            <person name="Karanyi Z."/>
            <person name="Kato M."/>
            <person name="Keller N."/>
            <person name="Kelly D.E."/>
            <person name="Kiel J.A."/>
            <person name="Kim J.M."/>
            <person name="van der Klei I.J."/>
            <person name="Klis F.M."/>
            <person name="Kovalchuk A."/>
            <person name="Krasevec N."/>
            <person name="Kubicek C.P."/>
            <person name="Liu B."/>
            <person name="Maccabe A."/>
            <person name="Meyer V."/>
            <person name="Mirabito P."/>
            <person name="Miskei M."/>
            <person name="Mos M."/>
            <person name="Mullins J."/>
            <person name="Nelson D.R."/>
            <person name="Nielsen J."/>
            <person name="Oakley B.R."/>
            <person name="Osmani S.A."/>
            <person name="Pakula T."/>
            <person name="Paszewski A."/>
            <person name="Paulsen I."/>
            <person name="Pilsyk S."/>
            <person name="Pocsi I."/>
            <person name="Punt P.J."/>
            <person name="Ram A.F."/>
            <person name="Ren Q."/>
            <person name="Robellet X."/>
            <person name="Robson G."/>
            <person name="Seiboth B."/>
            <person name="van Solingen P."/>
            <person name="Specht T."/>
            <person name="Sun J."/>
            <person name="Taheri-Talesh N."/>
            <person name="Takeshita N."/>
            <person name="Ussery D."/>
            <person name="vanKuyk P.A."/>
            <person name="Visser H."/>
            <person name="van de Vondervoort P.J."/>
            <person name="de Vries R.P."/>
            <person name="Walton J."/>
            <person name="Xiang X."/>
            <person name="Xiong Y."/>
            <person name="Zeng A.P."/>
            <person name="Brandt B.W."/>
            <person name="Cornell M.J."/>
            <person name="van den Hondel C.A."/>
            <person name="Visser J."/>
            <person name="Oliver S.G."/>
            <person name="Turner G."/>
        </authorList>
    </citation>
    <scope>GENOME REANNOTATION</scope>
    <source>
        <strain>FGSC A4 / ATCC 38163 / CBS 112.46 / NRRL 194 / M139</strain>
    </source>
</reference>
<reference key="4">
    <citation type="journal article" date="2006" name="Proc. Natl. Acad. Sci. U.S.A.">
        <title>Development and application of a suite of polysaccharide-degrading enzymes for analyzing plant cell walls.</title>
        <authorList>
            <person name="Bauer S."/>
            <person name="Vasu P."/>
            <person name="Persson S."/>
            <person name="Mort A.J."/>
            <person name="Somerville C.R."/>
        </authorList>
    </citation>
    <scope>FUNCTION</scope>
    <scope>BIOPHYSICOCHEMICAL PROPERTIES</scope>
    <source>
        <strain>FGSC A4 / ATCC 38163 / CBS 112.46 / NRRL 194 / M139</strain>
    </source>
</reference>
<sequence>MALLLSLSLLATTISAQQIGTPEIRPRLTTYHCTSANGCTEQNTSVVLDAATHPIHDASNPSVSCTTSNGLNPALCPDKQTCADNCVIDGITDYAAHGVETHGSRLTLTQYRNVNGALSSVSPRVYLVDESDPDEQEYRALSLLAQEFTFTVNVSALPCGMNGALYLSEMSPSGGRSALNPAGASYGTGYCDAQCYVNPWINGEGNINGYGACCNEMDIWEANSRSTGFTPHACLYEPEETEGRGVYECASEDECDSAGENDGICDKWGCGFNPYALGNTEYYGRGQGFEVDTKEPFTVVTQFLTDDGTSTGALTEIRRLYIQNGQVIENAVVSSGADSLTDSLCASTASWFDSYGGMEGMGRALGRGMVLAMSIWNDAGGYMQWLDGGDAGPCNATEGAPEFIEEHTPWTRVVFEDLKWGDIGSTFQAS</sequence>
<accession>Q5B7R2</accession>
<accession>C8VHK3</accession>
<accession>Q8NK01</accession>
<keyword id="KW-0119">Carbohydrate metabolism</keyword>
<keyword id="KW-0136">Cellulose degradation</keyword>
<keyword id="KW-0325">Glycoprotein</keyword>
<keyword id="KW-0326">Glycosidase</keyword>
<keyword id="KW-0378">Hydrolase</keyword>
<keyword id="KW-0624">Polysaccharide degradation</keyword>
<keyword id="KW-1185">Reference proteome</keyword>
<keyword id="KW-0964">Secreted</keyword>
<keyword id="KW-0732">Signal</keyword>
<dbReference type="EC" id="3.2.1.4"/>
<dbReference type="EMBL" id="AF420021">
    <property type="protein sequence ID" value="AAM54071.1"/>
    <property type="molecule type" value="Genomic_DNA"/>
</dbReference>
<dbReference type="EMBL" id="AACD01000055">
    <property type="protein sequence ID" value="EAA63386.1"/>
    <property type="molecule type" value="Genomic_DNA"/>
</dbReference>
<dbReference type="EMBL" id="BN001306">
    <property type="protein sequence ID" value="CBF82749.1"/>
    <property type="molecule type" value="Genomic_DNA"/>
</dbReference>
<dbReference type="RefSeq" id="XP_661022.1">
    <property type="nucleotide sequence ID" value="XM_655930.1"/>
</dbReference>
<dbReference type="SMR" id="Q5B7R2"/>
<dbReference type="STRING" id="227321.Q5B7R2"/>
<dbReference type="CAZy" id="GH7">
    <property type="family name" value="Glycoside Hydrolase Family 7"/>
</dbReference>
<dbReference type="GlyCosmos" id="Q5B7R2">
    <property type="glycosylation" value="3 sites, No reported glycans"/>
</dbReference>
<dbReference type="EnsemblFungi" id="CBF82749">
    <property type="protein sequence ID" value="CBF82749"/>
    <property type="gene ID" value="ANIA_03418"/>
</dbReference>
<dbReference type="KEGG" id="ani:ANIA_03418"/>
<dbReference type="eggNOG" id="ENOG502RWSR">
    <property type="taxonomic scope" value="Eukaryota"/>
</dbReference>
<dbReference type="HOGENOM" id="CLU_020817_0_1_1"/>
<dbReference type="InParanoid" id="Q5B7R2"/>
<dbReference type="OMA" id="ALCPDKK"/>
<dbReference type="OrthoDB" id="412382at2759"/>
<dbReference type="Proteomes" id="UP000000560">
    <property type="component" value="Chromosome VI"/>
</dbReference>
<dbReference type="GO" id="GO:0005576">
    <property type="term" value="C:extracellular region"/>
    <property type="evidence" value="ECO:0007669"/>
    <property type="project" value="UniProtKB-SubCell"/>
</dbReference>
<dbReference type="GO" id="GO:0008810">
    <property type="term" value="F:cellulase activity"/>
    <property type="evidence" value="ECO:0000314"/>
    <property type="project" value="UniProtKB"/>
</dbReference>
<dbReference type="GO" id="GO:0030245">
    <property type="term" value="P:cellulose catabolic process"/>
    <property type="evidence" value="ECO:0007669"/>
    <property type="project" value="UniProtKB-KW"/>
</dbReference>
<dbReference type="GO" id="GO:0009251">
    <property type="term" value="P:glucan catabolic process"/>
    <property type="evidence" value="ECO:0000314"/>
    <property type="project" value="UniProtKB"/>
</dbReference>
<dbReference type="CDD" id="cd07999">
    <property type="entry name" value="GH7_CBH_EG"/>
    <property type="match status" value="1"/>
</dbReference>
<dbReference type="Gene3D" id="2.70.100.10">
    <property type="entry name" value="Glycoside hydrolase, family 7, domain"/>
    <property type="match status" value="1"/>
</dbReference>
<dbReference type="InterPro" id="IPR013320">
    <property type="entry name" value="ConA-like_dom_sf"/>
</dbReference>
<dbReference type="InterPro" id="IPR001722">
    <property type="entry name" value="Glyco_hydro_7"/>
</dbReference>
<dbReference type="InterPro" id="IPR037019">
    <property type="entry name" value="Glyco_hydro_7_sf"/>
</dbReference>
<dbReference type="PANTHER" id="PTHR33753">
    <property type="entry name" value="1,4-BETA-D-GLUCAN CELLOBIOHYDROLASE B"/>
    <property type="match status" value="1"/>
</dbReference>
<dbReference type="PANTHER" id="PTHR33753:SF1">
    <property type="entry name" value="ENDO-BETA-1,4-GLUCANASE CELB"/>
    <property type="match status" value="1"/>
</dbReference>
<dbReference type="Pfam" id="PF00840">
    <property type="entry name" value="Glyco_hydro_7"/>
    <property type="match status" value="1"/>
</dbReference>
<dbReference type="PRINTS" id="PR00734">
    <property type="entry name" value="GLHYDRLASE7"/>
</dbReference>
<dbReference type="SUPFAM" id="SSF49899">
    <property type="entry name" value="Concanavalin A-like lectins/glucanases"/>
    <property type="match status" value="1"/>
</dbReference>
<proteinExistence type="evidence at protein level"/>
<feature type="signal peptide" evidence="2">
    <location>
        <begin position="1"/>
        <end position="16"/>
    </location>
</feature>
<feature type="chain" id="PRO_0000395159" description="Endo-beta-1,4-glucanase celB">
    <location>
        <begin position="17"/>
        <end position="430"/>
    </location>
</feature>
<feature type="active site" description="Nucleophile" evidence="1">
    <location>
        <position position="216"/>
    </location>
</feature>
<feature type="active site" description="Proton donor" evidence="1">
    <location>
        <position position="221"/>
    </location>
</feature>
<feature type="glycosylation site" description="N-linked (GlcNAc...) asparagine" evidence="2">
    <location>
        <position position="43"/>
    </location>
</feature>
<feature type="glycosylation site" description="N-linked (GlcNAc...) asparagine" evidence="2">
    <location>
        <position position="153"/>
    </location>
</feature>
<feature type="glycosylation site" description="N-linked (GlcNAc...) asparagine" evidence="2">
    <location>
        <position position="395"/>
    </location>
</feature>
<feature type="sequence conflict" description="In Ref. 1; AAM54071." evidence="4" ref="1">
    <original>S</original>
    <variation>Y</variation>
    <location>
        <position position="45"/>
    </location>
</feature>
<feature type="sequence conflict" description="In Ref. 1; AAM54071." evidence="4" ref="1">
    <original>P</original>
    <variation>R</variation>
    <location>
        <position position="73"/>
    </location>
</feature>
<feature type="sequence conflict" description="In Ref. 1; AAM54071." evidence="4" ref="1">
    <original>N</original>
    <variation>Y</variation>
    <location>
        <position position="113"/>
    </location>
</feature>
<feature type="sequence conflict" description="In Ref. 1; AAM54071." evidence="4" ref="1">
    <original>N</original>
    <variation>Y</variation>
    <location>
        <position position="153"/>
    </location>
</feature>
<feature type="sequence conflict" description="In Ref. 1; AAM54071." evidence="4" ref="1">
    <original>E</original>
    <variation>D</variation>
    <location>
        <position position="316"/>
    </location>
</feature>
<feature type="sequence conflict" description="In Ref. 1; AAM54071." evidence="4" ref="1">
    <original>C</original>
    <variation>W</variation>
    <location>
        <position position="345"/>
    </location>
</feature>
<organism>
    <name type="scientific">Emericella nidulans (strain FGSC A4 / ATCC 38163 / CBS 112.46 / NRRL 194 / M139)</name>
    <name type="common">Aspergillus nidulans</name>
    <dbReference type="NCBI Taxonomy" id="227321"/>
    <lineage>
        <taxon>Eukaryota</taxon>
        <taxon>Fungi</taxon>
        <taxon>Dikarya</taxon>
        <taxon>Ascomycota</taxon>
        <taxon>Pezizomycotina</taxon>
        <taxon>Eurotiomycetes</taxon>
        <taxon>Eurotiomycetidae</taxon>
        <taxon>Eurotiales</taxon>
        <taxon>Aspergillaceae</taxon>
        <taxon>Aspergillus</taxon>
        <taxon>Aspergillus subgen. Nidulantes</taxon>
    </lineage>
</organism>
<gene>
    <name type="primary">celB</name>
    <name type="synonym">eglB</name>
    <name type="synonym">eglC</name>
    <name type="ORF">AN3418</name>
</gene>
<protein>
    <recommendedName>
        <fullName>Endo-beta-1,4-glucanase celB</fullName>
        <shortName>Endoglucanase celB</shortName>
        <ecNumber>3.2.1.4</ecNumber>
    </recommendedName>
    <alternativeName>
        <fullName>Carboxymethylcellulase celB</fullName>
    </alternativeName>
    <alternativeName>
        <fullName>Cellulase B</fullName>
    </alternativeName>
</protein>